<keyword id="KW-0007">Acetylation</keyword>
<keyword id="KW-0010">Activator</keyword>
<keyword id="KW-0051">Antiviral defense</keyword>
<keyword id="KW-0963">Cytoplasm</keyword>
<keyword id="KW-0238">DNA-binding</keyword>
<keyword id="KW-0391">Immunity</keyword>
<keyword id="KW-0399">Innate immunity</keyword>
<keyword id="KW-1017">Isopeptide bond</keyword>
<keyword id="KW-0539">Nucleus</keyword>
<keyword id="KW-0597">Phosphoprotein</keyword>
<keyword id="KW-1185">Reference proteome</keyword>
<keyword id="KW-0678">Repressor</keyword>
<keyword id="KW-0804">Transcription</keyword>
<keyword id="KW-0805">Transcription regulation</keyword>
<keyword id="KW-0043">Tumor suppressor</keyword>
<keyword id="KW-0832">Ubl conjugation</keyword>
<comment type="function">
    <text evidence="2">Transcriptional regulator which displays a remarkable functional diversity in the regulation of cellular responses (By similarity). Regulates transcription of IFN and IFN-inducible genes, host response to viral and bacterial infections, regulation of many genes expressed during hematopoiesis, inflammation, immune responses and cell proliferation and differentiation, regulation of the cell cycle and induction of growth arrest and programmed cell death following DNA damage (By similarity). Stimulates both innate and acquired immune responses through the activation of specific target genes and can act as a transcriptional activator and repressor regulating target genes by binding to an interferon-stimulated response element (ISRE) in their promoters (By similarity). Has an essentail role in IFNG-dependent immunity to mycobacteria (By similarity). Binds to a consensus sequence in gene promoters (By similarity). Its target genes for transcriptional activation activity include: genes involved in anti-viral response, such as IFN-alpha/beta, RIGI, TNFSF10/TRAIL, ZBP1, OAS1/2, PIAS1/GBP, EIF2AK2/PKR and RSAD2/viperin; antibacterial response, such as GBP2, GBP5 and NOS2/INOS; anti-proliferative response, such as p53/TP53, LOX and CDKN1A; apoptosis, such as BBC3/PUMA, CASP1, CASP7 and CASP8; immune response, such as IL7, IL12A/B and IL15, PTGS2/COX2 and CYBB; DNA damage responses and DNA repair, such as POLQ/POLH; MHC class I expression, such as TAP1, PSMB9/LMP2, PSME1/PA28A, PSME2/PA28B and B2M and MHC class II expression, such as CIITA; metabolic enzymes, such as ACOD1/IRG1 (By similarity). Represses genes involved in anti-proliferative response, such as BIRC5/survivin, CCNB1, CCNE1, CDK1, CDK2 and CDK4 and in immune response, such as FOXP3, IL4, ANXA2 and TLR4 (By similarity). Stimulates p53/TP53-dependent transcription through enhanced recruitment of EP300 leading to increased acetylation of p53/TP53 (By similarity). Plays an important role in immune response directly affecting NK maturation and activity, macrophage production of IL12, Th1 development and maturation of CD8+ T-cells (By similarity). Also implicated in the differentiation and maturation of dendritic cells and in the suppression of regulatory T (Treg) cells development (By similarity). Acts as a tumor suppressor and plays a role not only in antagonism of tumor cell growth but also in stimulating an immune response against tumor cells (By similarity).</text>
</comment>
<comment type="activity regulation">
    <text evidence="3">Activated by MYD88.</text>
</comment>
<comment type="subunit">
    <text evidence="2 3">Monomer (By similarity). Homodimer (By similarity). Interacts with EP300 (By similarity). Interacts with MYD88 (By similarity). Interacts with PIAS3 (By similarity). Interacts with SPOP (By similarity).</text>
</comment>
<comment type="subcellular location">
    <subcellularLocation>
        <location evidence="3">Nucleus</location>
    </subcellularLocation>
    <subcellularLocation>
        <location evidence="3">Cytoplasm</location>
    </subcellularLocation>
    <text evidence="3">MYD88-associated IRF1 migrates into the nucleus more efficiently than non-MYD88-associated IRF1.</text>
</comment>
<comment type="PTM">
    <text evidence="2">Phosphorylated by CK2 and this positively regulates its activity.</text>
</comment>
<comment type="PTM">
    <text evidence="2 3">Sumoylation represses the transcriptional activity and displays enhanced resistance to protein degradation (By similarity). Sumoylated by UBE2I/UBC9 and SUMO1 (By similarity). Inactivates the tumor suppressor activity (By similarity). Elevated levels in tumor cells. Major site is Lys-276 (By similarity). Sumoylation is enhanced by PIAS3 (By similarity). Desumoylated by SENP1 in tumor cells and appears to compete with ubiquitination on C-terminal sites (By similarity).</text>
</comment>
<comment type="PTM">
    <text evidence="2">Ubiquitinated in a SPOP-depedent manner. Appears to compete with sumoylation on C-terminal sites (By similarity).</text>
</comment>
<comment type="similarity">
    <text evidence="4">Belongs to the IRF family.</text>
</comment>
<feature type="chain" id="PRO_0000273191" description="Interferon regulatory factor 1">
    <location>
        <begin position="1"/>
        <end position="322"/>
    </location>
</feature>
<feature type="DNA-binding region" description="IRF tryptophan pentad repeat" evidence="4">
    <location>
        <begin position="5"/>
        <end position="113"/>
    </location>
</feature>
<feature type="region of interest" description="Disordered" evidence="5">
    <location>
        <begin position="92"/>
        <end position="164"/>
    </location>
</feature>
<feature type="compositionally biased region" description="Polar residues" evidence="5">
    <location>
        <begin position="141"/>
        <end position="157"/>
    </location>
</feature>
<feature type="modified residue" description="N6-acetyllysine" evidence="2">
    <location>
        <position position="78"/>
    </location>
</feature>
<feature type="cross-link" description="Glycyl lysine isopeptide (Lys-Gly) (interchain with G-Cter in SUMO)" evidence="1">
    <location>
        <position position="276"/>
    </location>
</feature>
<feature type="cross-link" description="Glycyl lysine isopeptide (Lys-Gly) (interchain with G-Cter in SUMO)" evidence="1">
    <location>
        <position position="296"/>
    </location>
</feature>
<accession>A0FIN4</accession>
<protein>
    <recommendedName>
        <fullName>Interferon regulatory factor 1</fullName>
        <shortName>IRF-1</shortName>
    </recommendedName>
</protein>
<gene>
    <name type="primary">IRF1</name>
</gene>
<sequence>MPITRMRMRPWLEMQINSNQIPGLIWINKEEMIFQIPWKHAAKHGWDINKDACLFRSWAIHTGRYKAGEKEPDPKTWKANFRCAMNSLPDIEEVKDQSRNKGSSAVRVYRMLPPLTKNQRKERKSKSSRDAKCKAKKKSCGESSPDTFSDGLSSSTLPDDHSSYTAQGYIGQDLDIEQALTPALSPCAISSTLPEWRIPVEIVPDSTSDLYNFQVSPMPSTSEAATDEDEEGKLTEDIMKLLEQSGWQQTNVDGKGYLLNEPGAQPTAVYGDFSCKEEPEVESPGGYTGLISSDLKNVDTSWLDNLLTPVRLPSIQAIPCAP</sequence>
<proteinExistence type="evidence at transcript level"/>
<name>IRF1_PIG</name>
<dbReference type="EMBL" id="EF011020">
    <property type="protein sequence ID" value="ABJ98327.1"/>
    <property type="molecule type" value="mRNA"/>
</dbReference>
<dbReference type="RefSeq" id="NP_001090882.1">
    <property type="nucleotide sequence ID" value="NM_001097413.1"/>
</dbReference>
<dbReference type="RefSeq" id="XP_020935903.1">
    <property type="nucleotide sequence ID" value="XM_021080244.1"/>
</dbReference>
<dbReference type="SMR" id="A0FIN4"/>
<dbReference type="FunCoup" id="A0FIN4">
    <property type="interactions" value="512"/>
</dbReference>
<dbReference type="STRING" id="9823.ENSSSCP00000015188"/>
<dbReference type="PaxDb" id="9823-ENSSSCP00000015188"/>
<dbReference type="Ensembl" id="ENSSSCT00000015600.6">
    <property type="protein sequence ID" value="ENSSSCP00000015188.4"/>
    <property type="gene ID" value="ENSSSCG00000014277.6"/>
</dbReference>
<dbReference type="Ensembl" id="ENSSSCT00040039469.1">
    <property type="protein sequence ID" value="ENSSSCP00040016534.1"/>
    <property type="gene ID" value="ENSSSCG00040029260.1"/>
</dbReference>
<dbReference type="Ensembl" id="ENSSSCT00050107511.1">
    <property type="protein sequence ID" value="ENSSSCP00050047547.1"/>
    <property type="gene ID" value="ENSSSCG00050078024.1"/>
</dbReference>
<dbReference type="Ensembl" id="ENSSSCT00055006796.1">
    <property type="protein sequence ID" value="ENSSSCP00055005352.1"/>
    <property type="gene ID" value="ENSSSCG00055003394.1"/>
</dbReference>
<dbReference type="Ensembl" id="ENSSSCT00055006804.1">
    <property type="protein sequence ID" value="ENSSSCP00055005359.1"/>
    <property type="gene ID" value="ENSSSCG00055003394.1"/>
</dbReference>
<dbReference type="Ensembl" id="ENSSSCT00055006835.1">
    <property type="protein sequence ID" value="ENSSSCP00055005387.1"/>
    <property type="gene ID" value="ENSSSCG00055003394.1"/>
</dbReference>
<dbReference type="Ensembl" id="ENSSSCT00065022036.1">
    <property type="protein sequence ID" value="ENSSSCP00065008948.1"/>
    <property type="gene ID" value="ENSSSCG00065016598.1"/>
</dbReference>
<dbReference type="Ensembl" id="ENSSSCT00065022056.1">
    <property type="protein sequence ID" value="ENSSSCP00065008957.1"/>
    <property type="gene ID" value="ENSSSCG00065016598.1"/>
</dbReference>
<dbReference type="Ensembl" id="ENSSSCT00065022071.1">
    <property type="protein sequence ID" value="ENSSSCP00065008965.1"/>
    <property type="gene ID" value="ENSSSCG00065016598.1"/>
</dbReference>
<dbReference type="Ensembl" id="ENSSSCT00070039571.1">
    <property type="protein sequence ID" value="ENSSSCP00070033143.1"/>
    <property type="gene ID" value="ENSSSCG00070019937.1"/>
</dbReference>
<dbReference type="Ensembl" id="ENSSSCT00070039582.1">
    <property type="protein sequence ID" value="ENSSSCP00070033151.1"/>
    <property type="gene ID" value="ENSSSCG00070019937.1"/>
</dbReference>
<dbReference type="Ensembl" id="ENSSSCT00070039596.1">
    <property type="protein sequence ID" value="ENSSSCP00070033167.1"/>
    <property type="gene ID" value="ENSSSCG00070019937.1"/>
</dbReference>
<dbReference type="Ensembl" id="ENSSSCT00085048954">
    <property type="protein sequence ID" value="ENSSSCP00085034329"/>
    <property type="gene ID" value="ENSSSCG00085025461"/>
</dbReference>
<dbReference type="Ensembl" id="ENSSSCT00090048308">
    <property type="protein sequence ID" value="ENSSSCP00090030034"/>
    <property type="gene ID" value="ENSSSCG00090027290"/>
</dbReference>
<dbReference type="Ensembl" id="ENSSSCT00105060216">
    <property type="protein sequence ID" value="ENSSSCP00105042526"/>
    <property type="gene ID" value="ENSSSCG00105031707"/>
</dbReference>
<dbReference type="Ensembl" id="ENSSSCT00110020120">
    <property type="protein sequence ID" value="ENSSSCP00110013605"/>
    <property type="gene ID" value="ENSSSCG00110010481"/>
</dbReference>
<dbReference type="Ensembl" id="ENSSSCT00115028030">
    <property type="protein sequence ID" value="ENSSSCP00115026583"/>
    <property type="gene ID" value="ENSSSCG00115016020"/>
</dbReference>
<dbReference type="Ensembl" id="ENSSSCT00130068545">
    <property type="protein sequence ID" value="ENSSSCP00130049285"/>
    <property type="gene ID" value="ENSSSCG00130035044"/>
</dbReference>
<dbReference type="GeneID" id="396611"/>
<dbReference type="KEGG" id="ssc:396611"/>
<dbReference type="CTD" id="3659"/>
<dbReference type="VGNC" id="VGNC:89203">
    <property type="gene designation" value="IRF1"/>
</dbReference>
<dbReference type="eggNOG" id="ENOG502QVVN">
    <property type="taxonomic scope" value="Eukaryota"/>
</dbReference>
<dbReference type="GeneTree" id="ENSGT00940000156288"/>
<dbReference type="HOGENOM" id="CLU_056386_1_0_1"/>
<dbReference type="InParanoid" id="A0FIN4"/>
<dbReference type="OMA" id="HSGYTIH"/>
<dbReference type="OrthoDB" id="6538197at2759"/>
<dbReference type="TreeFam" id="TF328512"/>
<dbReference type="Proteomes" id="UP000008227">
    <property type="component" value="Chromosome 2"/>
</dbReference>
<dbReference type="Proteomes" id="UP000314985">
    <property type="component" value="Chromosome 2"/>
</dbReference>
<dbReference type="Proteomes" id="UP000694570">
    <property type="component" value="Unplaced"/>
</dbReference>
<dbReference type="Proteomes" id="UP000694571">
    <property type="component" value="Unplaced"/>
</dbReference>
<dbReference type="Proteomes" id="UP000694720">
    <property type="component" value="Unplaced"/>
</dbReference>
<dbReference type="Proteomes" id="UP000694722">
    <property type="component" value="Unplaced"/>
</dbReference>
<dbReference type="Proteomes" id="UP000694723">
    <property type="component" value="Unplaced"/>
</dbReference>
<dbReference type="Proteomes" id="UP000694724">
    <property type="component" value="Unplaced"/>
</dbReference>
<dbReference type="Proteomes" id="UP000694725">
    <property type="component" value="Unplaced"/>
</dbReference>
<dbReference type="Proteomes" id="UP000694726">
    <property type="component" value="Unplaced"/>
</dbReference>
<dbReference type="Proteomes" id="UP000694727">
    <property type="component" value="Unplaced"/>
</dbReference>
<dbReference type="Proteomes" id="UP000694728">
    <property type="component" value="Unplaced"/>
</dbReference>
<dbReference type="GO" id="GO:0000785">
    <property type="term" value="C:chromatin"/>
    <property type="evidence" value="ECO:0007669"/>
    <property type="project" value="Ensembl"/>
</dbReference>
<dbReference type="GO" id="GO:0005737">
    <property type="term" value="C:cytoplasm"/>
    <property type="evidence" value="ECO:0000250"/>
    <property type="project" value="UniProtKB"/>
</dbReference>
<dbReference type="GO" id="GO:0005634">
    <property type="term" value="C:nucleus"/>
    <property type="evidence" value="ECO:0000250"/>
    <property type="project" value="UniProtKB"/>
</dbReference>
<dbReference type="GO" id="GO:0001228">
    <property type="term" value="F:DNA-binding transcription activator activity, RNA polymerase II-specific"/>
    <property type="evidence" value="ECO:0007669"/>
    <property type="project" value="Ensembl"/>
</dbReference>
<dbReference type="GO" id="GO:0000981">
    <property type="term" value="F:DNA-binding transcription factor activity, RNA polymerase II-specific"/>
    <property type="evidence" value="ECO:0000250"/>
    <property type="project" value="UniProtKB"/>
</dbReference>
<dbReference type="GO" id="GO:0000978">
    <property type="term" value="F:RNA polymerase II cis-regulatory region sequence-specific DNA binding"/>
    <property type="evidence" value="ECO:0007669"/>
    <property type="project" value="Ensembl"/>
</dbReference>
<dbReference type="GO" id="GO:0000976">
    <property type="term" value="F:transcription cis-regulatory region binding"/>
    <property type="evidence" value="ECO:0000250"/>
    <property type="project" value="UniProtKB"/>
</dbReference>
<dbReference type="GO" id="GO:0006915">
    <property type="term" value="P:apoptotic process"/>
    <property type="evidence" value="ECO:0000250"/>
    <property type="project" value="UniProtKB"/>
</dbReference>
<dbReference type="GO" id="GO:0043374">
    <property type="term" value="P:CD8-positive, alpha-beta T cell differentiation"/>
    <property type="evidence" value="ECO:0007669"/>
    <property type="project" value="Ensembl"/>
</dbReference>
<dbReference type="GO" id="GO:0035458">
    <property type="term" value="P:cellular response to interferon-beta"/>
    <property type="evidence" value="ECO:0007669"/>
    <property type="project" value="Ensembl"/>
</dbReference>
<dbReference type="GO" id="GO:0071260">
    <property type="term" value="P:cellular response to mechanical stimulus"/>
    <property type="evidence" value="ECO:0007669"/>
    <property type="project" value="Ensembl"/>
</dbReference>
<dbReference type="GO" id="GO:0051607">
    <property type="term" value="P:defense response to virus"/>
    <property type="evidence" value="ECO:0000250"/>
    <property type="project" value="UniProtKB"/>
</dbReference>
<dbReference type="GO" id="GO:0045892">
    <property type="term" value="P:negative regulation of DNA-templated transcription"/>
    <property type="evidence" value="ECO:0000250"/>
    <property type="project" value="UniProtKB"/>
</dbReference>
<dbReference type="GO" id="GO:0045590">
    <property type="term" value="P:negative regulation of regulatory T cell differentiation"/>
    <property type="evidence" value="ECO:0000250"/>
    <property type="project" value="UniProtKB"/>
</dbReference>
<dbReference type="GO" id="GO:0045893">
    <property type="term" value="P:positive regulation of DNA-templated transcription"/>
    <property type="evidence" value="ECO:0000250"/>
    <property type="project" value="UniProtKB"/>
</dbReference>
<dbReference type="GO" id="GO:0032728">
    <property type="term" value="P:positive regulation of interferon-beta production"/>
    <property type="evidence" value="ECO:0000250"/>
    <property type="project" value="UniProtKB"/>
</dbReference>
<dbReference type="GO" id="GO:0032735">
    <property type="term" value="P:positive regulation of interleukin-12 production"/>
    <property type="evidence" value="ECO:0007669"/>
    <property type="project" value="Ensembl"/>
</dbReference>
<dbReference type="GO" id="GO:0045944">
    <property type="term" value="P:positive regulation of transcription by RNA polymerase II"/>
    <property type="evidence" value="ECO:0000250"/>
    <property type="project" value="UniProtKB"/>
</dbReference>
<dbReference type="GO" id="GO:0032481">
    <property type="term" value="P:positive regulation of type I interferon production"/>
    <property type="evidence" value="ECO:0000250"/>
    <property type="project" value="UniProtKB"/>
</dbReference>
<dbReference type="GO" id="GO:2000564">
    <property type="term" value="P:regulation of CD8-positive, alpha-beta T cell proliferation"/>
    <property type="evidence" value="ECO:0000250"/>
    <property type="project" value="UniProtKB"/>
</dbReference>
<dbReference type="GO" id="GO:0051726">
    <property type="term" value="P:regulation of cell cycle"/>
    <property type="evidence" value="ECO:0000250"/>
    <property type="project" value="UniProtKB"/>
</dbReference>
<dbReference type="GO" id="GO:0034124">
    <property type="term" value="P:regulation of MyD88-dependent toll-like receptor signaling pathway"/>
    <property type="evidence" value="ECO:0000250"/>
    <property type="project" value="UniProtKB"/>
</dbReference>
<dbReference type="GO" id="GO:0006366">
    <property type="term" value="P:transcription by RNA polymerase II"/>
    <property type="evidence" value="ECO:0007669"/>
    <property type="project" value="Ensembl"/>
</dbReference>
<dbReference type="GO" id="GO:0060333">
    <property type="term" value="P:type II interferon-mediated signaling pathway"/>
    <property type="evidence" value="ECO:0000250"/>
    <property type="project" value="UniProtKB"/>
</dbReference>
<dbReference type="CDD" id="cd00103">
    <property type="entry name" value="IRF"/>
    <property type="match status" value="1"/>
</dbReference>
<dbReference type="FunFam" id="1.10.10.10:FF:000065">
    <property type="entry name" value="Interferon regulatory factor"/>
    <property type="match status" value="1"/>
</dbReference>
<dbReference type="Gene3D" id="1.10.10.10">
    <property type="entry name" value="Winged helix-like DNA-binding domain superfamily/Winged helix DNA-binding domain"/>
    <property type="match status" value="1"/>
</dbReference>
<dbReference type="InterPro" id="IPR019817">
    <property type="entry name" value="Interferon_reg_fac_CS"/>
</dbReference>
<dbReference type="InterPro" id="IPR001346">
    <property type="entry name" value="Interferon_reg_fact_DNA-bd_dom"/>
</dbReference>
<dbReference type="InterPro" id="IPR017431">
    <property type="entry name" value="IRF1/IRF2"/>
</dbReference>
<dbReference type="InterPro" id="IPR036388">
    <property type="entry name" value="WH-like_DNA-bd_sf"/>
</dbReference>
<dbReference type="InterPro" id="IPR036390">
    <property type="entry name" value="WH_DNA-bd_sf"/>
</dbReference>
<dbReference type="PANTHER" id="PTHR11949">
    <property type="entry name" value="INTERFERON REGULATORY FACTOR"/>
    <property type="match status" value="1"/>
</dbReference>
<dbReference type="PANTHER" id="PTHR11949:SF3">
    <property type="entry name" value="INTERFERON REGULATORY FACTOR 1"/>
    <property type="match status" value="1"/>
</dbReference>
<dbReference type="Pfam" id="PF00605">
    <property type="entry name" value="IRF"/>
    <property type="match status" value="1"/>
</dbReference>
<dbReference type="PIRSF" id="PIRSF038196">
    <property type="entry name" value="IFN_RF1/2"/>
    <property type="match status" value="1"/>
</dbReference>
<dbReference type="PRINTS" id="PR00267">
    <property type="entry name" value="INTFRNREGFCT"/>
</dbReference>
<dbReference type="SMART" id="SM00348">
    <property type="entry name" value="IRF"/>
    <property type="match status" value="1"/>
</dbReference>
<dbReference type="SUPFAM" id="SSF46785">
    <property type="entry name" value="Winged helix' DNA-binding domain"/>
    <property type="match status" value="1"/>
</dbReference>
<dbReference type="PROSITE" id="PS00601">
    <property type="entry name" value="IRF_1"/>
    <property type="match status" value="1"/>
</dbReference>
<dbReference type="PROSITE" id="PS51507">
    <property type="entry name" value="IRF_2"/>
    <property type="match status" value="1"/>
</dbReference>
<evidence type="ECO:0000250" key="1"/>
<evidence type="ECO:0000250" key="2">
    <source>
        <dbReference type="UniProtKB" id="P10914"/>
    </source>
</evidence>
<evidence type="ECO:0000250" key="3">
    <source>
        <dbReference type="UniProtKB" id="P15314"/>
    </source>
</evidence>
<evidence type="ECO:0000255" key="4">
    <source>
        <dbReference type="PROSITE-ProRule" id="PRU00840"/>
    </source>
</evidence>
<evidence type="ECO:0000256" key="5">
    <source>
        <dbReference type="SAM" id="MobiDB-lite"/>
    </source>
</evidence>
<organism>
    <name type="scientific">Sus scrofa</name>
    <name type="common">Pig</name>
    <dbReference type="NCBI Taxonomy" id="9823"/>
    <lineage>
        <taxon>Eukaryota</taxon>
        <taxon>Metazoa</taxon>
        <taxon>Chordata</taxon>
        <taxon>Craniata</taxon>
        <taxon>Vertebrata</taxon>
        <taxon>Euteleostomi</taxon>
        <taxon>Mammalia</taxon>
        <taxon>Eutheria</taxon>
        <taxon>Laurasiatheria</taxon>
        <taxon>Artiodactyla</taxon>
        <taxon>Suina</taxon>
        <taxon>Suidae</taxon>
        <taxon>Sus</taxon>
    </lineage>
</organism>
<reference key="1">
    <citation type="submission" date="2006-09" db="EMBL/GenBank/DDBJ databases">
        <title>Molecular cloning of interferon regulatory factor 1 (IRF1).</title>
        <authorList>
            <person name="Liu Y."/>
            <person name="Zhang Q."/>
        </authorList>
    </citation>
    <scope>NUCLEOTIDE SEQUENCE [MRNA]</scope>
</reference>